<evidence type="ECO:0000255" key="1">
    <source>
        <dbReference type="HAMAP-Rule" id="MF_00004"/>
    </source>
</evidence>
<sequence length="184" mass="19936">MMAMNTETLSLIKQSIKTIPNYPKEGILFRDVTSLLENAAAYKATIDLLVEHYRGQGFTKIVGTEARGFLFGAPLALELGVGFVPVRKPGKLPRATISQSYELEYGHDSLEIHTDAINPNDKVLVVDDLLATGGTIEATVKLIRQLGGEVKHAAFVISLPDLGGEARLTALGLELVKLCEFEGE</sequence>
<proteinExistence type="inferred from homology"/>
<dbReference type="EC" id="2.4.2.7" evidence="1"/>
<dbReference type="EMBL" id="CP000753">
    <property type="protein sequence ID" value="ABS08751.1"/>
    <property type="molecule type" value="Genomic_DNA"/>
</dbReference>
<dbReference type="SMR" id="A6WPL2"/>
<dbReference type="KEGG" id="sbm:Shew185_2616"/>
<dbReference type="HOGENOM" id="CLU_063339_3_0_6"/>
<dbReference type="UniPathway" id="UPA00588">
    <property type="reaction ID" value="UER00646"/>
</dbReference>
<dbReference type="GO" id="GO:0005737">
    <property type="term" value="C:cytoplasm"/>
    <property type="evidence" value="ECO:0007669"/>
    <property type="project" value="UniProtKB-SubCell"/>
</dbReference>
<dbReference type="GO" id="GO:0002055">
    <property type="term" value="F:adenine binding"/>
    <property type="evidence" value="ECO:0007669"/>
    <property type="project" value="TreeGrafter"/>
</dbReference>
<dbReference type="GO" id="GO:0003999">
    <property type="term" value="F:adenine phosphoribosyltransferase activity"/>
    <property type="evidence" value="ECO:0007669"/>
    <property type="project" value="UniProtKB-UniRule"/>
</dbReference>
<dbReference type="GO" id="GO:0016208">
    <property type="term" value="F:AMP binding"/>
    <property type="evidence" value="ECO:0007669"/>
    <property type="project" value="TreeGrafter"/>
</dbReference>
<dbReference type="GO" id="GO:0006168">
    <property type="term" value="P:adenine salvage"/>
    <property type="evidence" value="ECO:0007669"/>
    <property type="project" value="InterPro"/>
</dbReference>
<dbReference type="GO" id="GO:0044209">
    <property type="term" value="P:AMP salvage"/>
    <property type="evidence" value="ECO:0007669"/>
    <property type="project" value="UniProtKB-UniRule"/>
</dbReference>
<dbReference type="GO" id="GO:0006166">
    <property type="term" value="P:purine ribonucleoside salvage"/>
    <property type="evidence" value="ECO:0007669"/>
    <property type="project" value="UniProtKB-KW"/>
</dbReference>
<dbReference type="CDD" id="cd06223">
    <property type="entry name" value="PRTases_typeI"/>
    <property type="match status" value="1"/>
</dbReference>
<dbReference type="FunFam" id="3.40.50.2020:FF:000004">
    <property type="entry name" value="Adenine phosphoribosyltransferase"/>
    <property type="match status" value="1"/>
</dbReference>
<dbReference type="Gene3D" id="3.40.50.2020">
    <property type="match status" value="1"/>
</dbReference>
<dbReference type="HAMAP" id="MF_00004">
    <property type="entry name" value="Aden_phosphoribosyltr"/>
    <property type="match status" value="1"/>
</dbReference>
<dbReference type="InterPro" id="IPR005764">
    <property type="entry name" value="Ade_phspho_trans"/>
</dbReference>
<dbReference type="InterPro" id="IPR000836">
    <property type="entry name" value="PRibTrfase_dom"/>
</dbReference>
<dbReference type="InterPro" id="IPR029057">
    <property type="entry name" value="PRTase-like"/>
</dbReference>
<dbReference type="InterPro" id="IPR050054">
    <property type="entry name" value="UPRTase/APRTase"/>
</dbReference>
<dbReference type="NCBIfam" id="TIGR01090">
    <property type="entry name" value="apt"/>
    <property type="match status" value="1"/>
</dbReference>
<dbReference type="NCBIfam" id="NF002632">
    <property type="entry name" value="PRK02304.1-1"/>
    <property type="match status" value="1"/>
</dbReference>
<dbReference type="NCBIfam" id="NF002634">
    <property type="entry name" value="PRK02304.1-3"/>
    <property type="match status" value="1"/>
</dbReference>
<dbReference type="NCBIfam" id="NF002636">
    <property type="entry name" value="PRK02304.1-5"/>
    <property type="match status" value="1"/>
</dbReference>
<dbReference type="PANTHER" id="PTHR32315">
    <property type="entry name" value="ADENINE PHOSPHORIBOSYLTRANSFERASE"/>
    <property type="match status" value="1"/>
</dbReference>
<dbReference type="PANTHER" id="PTHR32315:SF3">
    <property type="entry name" value="ADENINE PHOSPHORIBOSYLTRANSFERASE"/>
    <property type="match status" value="1"/>
</dbReference>
<dbReference type="Pfam" id="PF00156">
    <property type="entry name" value="Pribosyltran"/>
    <property type="match status" value="1"/>
</dbReference>
<dbReference type="SUPFAM" id="SSF53271">
    <property type="entry name" value="PRTase-like"/>
    <property type="match status" value="1"/>
</dbReference>
<dbReference type="PROSITE" id="PS00103">
    <property type="entry name" value="PUR_PYR_PR_TRANSFER"/>
    <property type="match status" value="1"/>
</dbReference>
<keyword id="KW-0963">Cytoplasm</keyword>
<keyword id="KW-0328">Glycosyltransferase</keyword>
<keyword id="KW-0660">Purine salvage</keyword>
<keyword id="KW-0808">Transferase</keyword>
<organism>
    <name type="scientific">Shewanella baltica (strain OS185)</name>
    <dbReference type="NCBI Taxonomy" id="402882"/>
    <lineage>
        <taxon>Bacteria</taxon>
        <taxon>Pseudomonadati</taxon>
        <taxon>Pseudomonadota</taxon>
        <taxon>Gammaproteobacteria</taxon>
        <taxon>Alteromonadales</taxon>
        <taxon>Shewanellaceae</taxon>
        <taxon>Shewanella</taxon>
    </lineage>
</organism>
<reference key="1">
    <citation type="submission" date="2007-07" db="EMBL/GenBank/DDBJ databases">
        <title>Complete sequence of chromosome of Shewanella baltica OS185.</title>
        <authorList>
            <consortium name="US DOE Joint Genome Institute"/>
            <person name="Copeland A."/>
            <person name="Lucas S."/>
            <person name="Lapidus A."/>
            <person name="Barry K."/>
            <person name="Glavina del Rio T."/>
            <person name="Dalin E."/>
            <person name="Tice H."/>
            <person name="Pitluck S."/>
            <person name="Sims D."/>
            <person name="Brettin T."/>
            <person name="Bruce D."/>
            <person name="Detter J.C."/>
            <person name="Han C."/>
            <person name="Schmutz J."/>
            <person name="Larimer F."/>
            <person name="Land M."/>
            <person name="Hauser L."/>
            <person name="Kyrpides N."/>
            <person name="Mikhailova N."/>
            <person name="Brettar I."/>
            <person name="Rodrigues J."/>
            <person name="Konstantinidis K."/>
            <person name="Tiedje J."/>
            <person name="Richardson P."/>
        </authorList>
    </citation>
    <scope>NUCLEOTIDE SEQUENCE [LARGE SCALE GENOMIC DNA]</scope>
    <source>
        <strain>OS185</strain>
    </source>
</reference>
<gene>
    <name evidence="1" type="primary">apt</name>
    <name type="ordered locus">Shew185_2616</name>
</gene>
<protein>
    <recommendedName>
        <fullName evidence="1">Adenine phosphoribosyltransferase</fullName>
        <shortName evidence="1">APRT</shortName>
        <ecNumber evidence="1">2.4.2.7</ecNumber>
    </recommendedName>
</protein>
<feature type="chain" id="PRO_0000321402" description="Adenine phosphoribosyltransferase">
    <location>
        <begin position="1"/>
        <end position="184"/>
    </location>
</feature>
<accession>A6WPL2</accession>
<comment type="function">
    <text evidence="1">Catalyzes a salvage reaction resulting in the formation of AMP, that is energically less costly than de novo synthesis.</text>
</comment>
<comment type="catalytic activity">
    <reaction evidence="1">
        <text>AMP + diphosphate = 5-phospho-alpha-D-ribose 1-diphosphate + adenine</text>
        <dbReference type="Rhea" id="RHEA:16609"/>
        <dbReference type="ChEBI" id="CHEBI:16708"/>
        <dbReference type="ChEBI" id="CHEBI:33019"/>
        <dbReference type="ChEBI" id="CHEBI:58017"/>
        <dbReference type="ChEBI" id="CHEBI:456215"/>
        <dbReference type="EC" id="2.4.2.7"/>
    </reaction>
</comment>
<comment type="pathway">
    <text evidence="1">Purine metabolism; AMP biosynthesis via salvage pathway; AMP from adenine: step 1/1.</text>
</comment>
<comment type="subunit">
    <text evidence="1">Homodimer.</text>
</comment>
<comment type="subcellular location">
    <subcellularLocation>
        <location evidence="1">Cytoplasm</location>
    </subcellularLocation>
</comment>
<comment type="similarity">
    <text evidence="1">Belongs to the purine/pyrimidine phosphoribosyltransferase family.</text>
</comment>
<name>APT_SHEB8</name>